<organism>
    <name type="scientific">Arabidopsis thaliana</name>
    <name type="common">Mouse-ear cress</name>
    <dbReference type="NCBI Taxonomy" id="3702"/>
    <lineage>
        <taxon>Eukaryota</taxon>
        <taxon>Viridiplantae</taxon>
        <taxon>Streptophyta</taxon>
        <taxon>Embryophyta</taxon>
        <taxon>Tracheophyta</taxon>
        <taxon>Spermatophyta</taxon>
        <taxon>Magnoliopsida</taxon>
        <taxon>eudicotyledons</taxon>
        <taxon>Gunneridae</taxon>
        <taxon>Pentapetalae</taxon>
        <taxon>rosids</taxon>
        <taxon>malvids</taxon>
        <taxon>Brassicales</taxon>
        <taxon>Brassicaceae</taxon>
        <taxon>Camelineae</taxon>
        <taxon>Arabidopsis</taxon>
    </lineage>
</organism>
<feature type="signal peptide" evidence="2">
    <location>
        <begin position="1"/>
        <end position="26"/>
    </location>
</feature>
<feature type="chain" id="PRO_0000369432" description="Pectinesterase QRT1">
    <location>
        <begin position="27"/>
        <end position="380"/>
    </location>
</feature>
<feature type="active site" description="Proton donor" evidence="1">
    <location>
        <position position="221"/>
    </location>
</feature>
<feature type="active site" description="Nucleophile" evidence="1">
    <location>
        <position position="242"/>
    </location>
</feature>
<feature type="binding site" evidence="1">
    <location>
        <position position="164"/>
    </location>
    <ligand>
        <name>substrate</name>
    </ligand>
</feature>
<feature type="binding site" evidence="1">
    <location>
        <position position="198"/>
    </location>
    <ligand>
        <name>substrate</name>
    </ligand>
</feature>
<feature type="binding site" evidence="1">
    <location>
        <position position="298"/>
    </location>
    <ligand>
        <name>substrate</name>
    </ligand>
</feature>
<feature type="binding site" evidence="1">
    <location>
        <position position="300"/>
    </location>
    <ligand>
        <name>substrate</name>
    </ligand>
</feature>
<feature type="site" description="Transition state stabilizer" evidence="1">
    <location>
        <position position="220"/>
    </location>
</feature>
<feature type="glycosylation site" description="N-linked (GlcNAc...) asparagine" evidence="3">
    <location>
        <position position="74"/>
    </location>
</feature>
<feature type="glycosylation site" description="N-linked (GlcNAc...) asparagine" evidence="3">
    <location>
        <position position="137"/>
    </location>
</feature>
<feature type="glycosylation site" description="N-linked (GlcNAc...) asparagine" evidence="3">
    <location>
        <position position="227"/>
    </location>
</feature>
<feature type="glycosylation site" description="N-linked (GlcNAc...) asparagine" evidence="3">
    <location>
        <position position="302"/>
    </location>
</feature>
<feature type="disulfide bond" evidence="1">
    <location>
        <begin position="235"/>
        <end position="255"/>
    </location>
</feature>
<proteinExistence type="evidence at protein level"/>
<reference key="1">
    <citation type="journal article" date="2006" name="Plant Physiol.">
        <title>Separation of Arabidopsis pollen tetrads is regulated by QUARTET1, a pectin methylesterase gene.</title>
        <authorList>
            <person name="Francis K.E."/>
            <person name="Lam S.Y."/>
            <person name="Copenhaver G.P."/>
        </authorList>
    </citation>
    <scope>NUCLEOTIDE SEQUENCE [MRNA]</scope>
    <scope>FUNCTION</scope>
    <scope>CATALYTIC ACTIVITY</scope>
    <scope>PATHWAY</scope>
    <scope>TISSUE SPECIFICITY</scope>
    <scope>DEVELOPMENTAL STAGE</scope>
    <scope>DISRUPTION PHENOTYPE</scope>
    <source>
        <strain>cv. Columbia</strain>
    </source>
</reference>
<reference key="2">
    <citation type="journal article" date="1998" name="DNA Res.">
        <title>Structural analysis of Arabidopsis thaliana chromosome 5. IV. Sequence features of the regions of 1,456,315 bp covered by nineteen physically assigned P1 and TAC clones.</title>
        <authorList>
            <person name="Sato S."/>
            <person name="Kaneko T."/>
            <person name="Kotani H."/>
            <person name="Nakamura Y."/>
            <person name="Asamizu E."/>
            <person name="Miyajima N."/>
            <person name="Tabata S."/>
        </authorList>
    </citation>
    <scope>NUCLEOTIDE SEQUENCE [LARGE SCALE GENOMIC DNA]</scope>
    <source>
        <strain>cv. Columbia</strain>
    </source>
</reference>
<reference key="3">
    <citation type="journal article" date="2017" name="Plant J.">
        <title>Araport11: a complete reannotation of the Arabidopsis thaliana reference genome.</title>
        <authorList>
            <person name="Cheng C.Y."/>
            <person name="Krishnakumar V."/>
            <person name="Chan A.P."/>
            <person name="Thibaud-Nissen F."/>
            <person name="Schobel S."/>
            <person name="Town C.D."/>
        </authorList>
    </citation>
    <scope>GENOME REANNOTATION</scope>
    <source>
        <strain>cv. Columbia</strain>
    </source>
</reference>
<reference key="4">
    <citation type="journal article" date="1994" name="Science">
        <title>Tetrad analysis possible in Arabidopsis with mutation of the QUARTET (QRT) genes.</title>
        <authorList>
            <person name="Preuss D."/>
            <person name="Rhee S.Y."/>
            <person name="Davis R.W."/>
        </authorList>
    </citation>
    <scope>FUNCTION</scope>
</reference>
<reference key="5">
    <citation type="journal article" date="1998" name="Plant J.">
        <title>Tetrad pollen formation in quartet mutants of Arabidopsis thaliana is associated with persistence of pectic polysaccharides of the pollen mother cell wall.</title>
        <authorList>
            <person name="Rhee S.Y."/>
            <person name="Somerville C.R."/>
        </authorList>
    </citation>
    <scope>FUNCTION</scope>
    <scope>CATALYTIC ACTIVITY</scope>
    <scope>PATHWAY</scope>
</reference>
<reference key="6">
    <citation type="journal article" date="2004" name="Carbohydr. Res.">
        <title>Pectin methylesterases: sequence-structural features and phylogenetic relationships.</title>
        <authorList>
            <person name="Markovic O."/>
            <person name="Janecek S."/>
        </authorList>
    </citation>
    <scope>GENE FAMILY</scope>
    <scope>NOMENCLATURE</scope>
</reference>
<reference key="7">
    <citation type="journal article" date="2006" name="Planta">
        <title>Comprehensive expression profiling of the pectin methylesterase gene family during silique development in Arabidopsis thaliana.</title>
        <authorList>
            <person name="Louvet R."/>
            <person name="Cavel E."/>
            <person name="Gutierrez L."/>
            <person name="Guenin S."/>
            <person name="Roger D."/>
            <person name="Gillet F."/>
            <person name="Guerineau F."/>
            <person name="Pelloux J."/>
        </authorList>
    </citation>
    <scope>TISSUE SPECIFICITY</scope>
    <scope>DEVELOPMENTAL STAGE</scope>
</reference>
<dbReference type="EC" id="3.1.1.11" evidence="5 7"/>
<dbReference type="EMBL" id="DQ979876">
    <property type="protein sequence ID" value="ABI97858.1"/>
    <property type="molecule type" value="mRNA"/>
</dbReference>
<dbReference type="EMBL" id="AB009050">
    <property type="protein sequence ID" value="BAB09226.1"/>
    <property type="molecule type" value="Genomic_DNA"/>
</dbReference>
<dbReference type="EMBL" id="CP002688">
    <property type="protein sequence ID" value="AED96653.1"/>
    <property type="molecule type" value="Genomic_DNA"/>
</dbReference>
<dbReference type="RefSeq" id="NP_200370.1">
    <property type="nucleotide sequence ID" value="NM_124941.3"/>
</dbReference>
<dbReference type="SMR" id="Q9FM79"/>
<dbReference type="FunCoup" id="Q9FM79">
    <property type="interactions" value="141"/>
</dbReference>
<dbReference type="STRING" id="3702.Q9FM79"/>
<dbReference type="GlyCosmos" id="Q9FM79">
    <property type="glycosylation" value="4 sites, No reported glycans"/>
</dbReference>
<dbReference type="GlyGen" id="Q9FM79">
    <property type="glycosylation" value="4 sites"/>
</dbReference>
<dbReference type="PaxDb" id="3702-AT5G55590.1"/>
<dbReference type="EnsemblPlants" id="AT5G55590.1">
    <property type="protein sequence ID" value="AT5G55590.1"/>
    <property type="gene ID" value="AT5G55590"/>
</dbReference>
<dbReference type="GeneID" id="835653"/>
<dbReference type="Gramene" id="AT5G55590.1">
    <property type="protein sequence ID" value="AT5G55590.1"/>
    <property type="gene ID" value="AT5G55590"/>
</dbReference>
<dbReference type="KEGG" id="ath:AT5G55590"/>
<dbReference type="Araport" id="AT5G55590"/>
<dbReference type="TAIR" id="AT5G55590">
    <property type="gene designation" value="QRT1"/>
</dbReference>
<dbReference type="eggNOG" id="ENOG502QS8M">
    <property type="taxonomic scope" value="Eukaryota"/>
</dbReference>
<dbReference type="HOGENOM" id="CLU_012243_3_3_1"/>
<dbReference type="InParanoid" id="Q9FM79"/>
<dbReference type="OMA" id="MFGEYNC"/>
<dbReference type="PhylomeDB" id="Q9FM79"/>
<dbReference type="BioCyc" id="ARA:AT5G55590-MONOMER"/>
<dbReference type="UniPathway" id="UPA00545">
    <property type="reaction ID" value="UER00823"/>
</dbReference>
<dbReference type="PRO" id="PR:Q9FM79"/>
<dbReference type="Proteomes" id="UP000006548">
    <property type="component" value="Chromosome 5"/>
</dbReference>
<dbReference type="ExpressionAtlas" id="Q9FM79">
    <property type="expression patterns" value="baseline and differential"/>
</dbReference>
<dbReference type="GO" id="GO:0005576">
    <property type="term" value="C:extracellular region"/>
    <property type="evidence" value="ECO:0007669"/>
    <property type="project" value="UniProtKB-KW"/>
</dbReference>
<dbReference type="GO" id="GO:0030599">
    <property type="term" value="F:pectinesterase activity"/>
    <property type="evidence" value="ECO:0000314"/>
    <property type="project" value="TAIR"/>
</dbReference>
<dbReference type="GO" id="GO:0042545">
    <property type="term" value="P:cell wall modification"/>
    <property type="evidence" value="ECO:0007669"/>
    <property type="project" value="InterPro"/>
</dbReference>
<dbReference type="GO" id="GO:0045490">
    <property type="term" value="P:pectin catabolic process"/>
    <property type="evidence" value="ECO:0000315"/>
    <property type="project" value="TAIR"/>
</dbReference>
<dbReference type="FunFam" id="2.160.20.10:FF:000008">
    <property type="entry name" value="Pectinesterase"/>
    <property type="match status" value="1"/>
</dbReference>
<dbReference type="Gene3D" id="2.160.20.10">
    <property type="entry name" value="Single-stranded right-handed beta-helix, Pectin lyase-like"/>
    <property type="match status" value="1"/>
</dbReference>
<dbReference type="InterPro" id="IPR012334">
    <property type="entry name" value="Pectin_lyas_fold"/>
</dbReference>
<dbReference type="InterPro" id="IPR011050">
    <property type="entry name" value="Pectin_lyase_fold/virulence"/>
</dbReference>
<dbReference type="InterPro" id="IPR000070">
    <property type="entry name" value="Pectinesterase_cat"/>
</dbReference>
<dbReference type="PANTHER" id="PTHR31321">
    <property type="entry name" value="ACYL-COA THIOESTER HYDROLASE YBHC-RELATED"/>
    <property type="match status" value="1"/>
</dbReference>
<dbReference type="PANTHER" id="PTHR31321:SF31">
    <property type="entry name" value="PECTINESTERASE QRT1"/>
    <property type="match status" value="1"/>
</dbReference>
<dbReference type="Pfam" id="PF01095">
    <property type="entry name" value="Pectinesterase"/>
    <property type="match status" value="1"/>
</dbReference>
<dbReference type="SUPFAM" id="SSF51126">
    <property type="entry name" value="Pectin lyase-like"/>
    <property type="match status" value="1"/>
</dbReference>
<gene>
    <name evidence="9" type="primary">QRT1</name>
    <name evidence="8" type="synonym">ARATH62</name>
    <name evidence="11" type="ordered locus">At5g55590</name>
    <name evidence="12" type="ORF">MDF20.3</name>
</gene>
<keyword id="KW-0063">Aspartyl esterase</keyword>
<keyword id="KW-0134">Cell wall</keyword>
<keyword id="KW-0961">Cell wall biogenesis/degradation</keyword>
<keyword id="KW-1015">Disulfide bond</keyword>
<keyword id="KW-0325">Glycoprotein</keyword>
<keyword id="KW-0378">Hydrolase</keyword>
<keyword id="KW-1185">Reference proteome</keyword>
<keyword id="KW-0964">Secreted</keyword>
<keyword id="KW-0732">Signal</keyword>
<sequence>MKVEAFIPAVLLLCFGVMLCLKSSCALQIGNNNELKNYISWEDLRVVEDGRIERSFSIKENSNWVTTNANANANATNVRRVIVVDKNGGGDSVTVQGAVDMVPDSNSQRVKIFILPGIYREKVIVPKSKPYISFIGNESYAGDTVISWSDKASDLGCDGKELGTYRTASVSIESDFFCATAITFENTVVAEAGEQGRQAVALRIIGDKAVFYRVRVLGSQDTLFDDNGSHYFYQCYIQGNVDFIFGNAKSLYQDCDIHSTAKRYGAIAAHHRDSETEDTGFSFVNCDISGTGQIYLGRAWGNYSRTVYSNCFIADIITPVGWSDWKHPERQRKVMFGEYNCRGRGAERGGRVPWSKTLTRDEVKPFLGREFIYGDQWLRL</sequence>
<protein>
    <recommendedName>
        <fullName evidence="9">Pectinesterase QRT1</fullName>
        <shortName evidence="9">PE QRT1</shortName>
        <ecNumber evidence="5 7">3.1.1.11</ecNumber>
    </recommendedName>
    <alternativeName>
        <fullName evidence="8">Pectin methylesterase 62</fullName>
        <shortName evidence="8">AtPME62</shortName>
    </alternativeName>
    <alternativeName>
        <fullName evidence="9">Pectin methylesterase QRT1</fullName>
    </alternativeName>
    <alternativeName>
        <fullName evidence="9">Protein QUARTET 1</fullName>
        <shortName evidence="9">AtQRT1</shortName>
    </alternativeName>
</protein>
<evidence type="ECO:0000250" key="1">
    <source>
        <dbReference type="UniProtKB" id="P0C1A9"/>
    </source>
</evidence>
<evidence type="ECO:0000255" key="2"/>
<evidence type="ECO:0000255" key="3">
    <source>
        <dbReference type="PROSITE-ProRule" id="PRU00498"/>
    </source>
</evidence>
<evidence type="ECO:0000269" key="4">
    <source>
    </source>
</evidence>
<evidence type="ECO:0000269" key="5">
    <source>
    </source>
</evidence>
<evidence type="ECO:0000269" key="6">
    <source>
    </source>
</evidence>
<evidence type="ECO:0000269" key="7">
    <source>
    </source>
</evidence>
<evidence type="ECO:0000303" key="8">
    <source>
    </source>
</evidence>
<evidence type="ECO:0000303" key="9">
    <source>
    </source>
</evidence>
<evidence type="ECO:0000305" key="10"/>
<evidence type="ECO:0000312" key="11">
    <source>
        <dbReference type="Araport" id="AT5G55590"/>
    </source>
</evidence>
<evidence type="ECO:0000312" key="12">
    <source>
        <dbReference type="EMBL" id="BAB09226.1"/>
    </source>
</evidence>
<name>PME62_ARATH</name>
<accession>Q9FM79</accession>
<comment type="function">
    <text evidence="5 6 7">Pectinesterase required for cell type-specific pectin degradation to separate microspores.</text>
</comment>
<comment type="catalytic activity">
    <reaction evidence="5 7">
        <text>[(1-&gt;4)-alpha-D-galacturonosyl methyl ester](n) + n H2O = [(1-&gt;4)-alpha-D-galacturonosyl](n) + n methanol + n H(+)</text>
        <dbReference type="Rhea" id="RHEA:22380"/>
        <dbReference type="Rhea" id="RHEA-COMP:14570"/>
        <dbReference type="Rhea" id="RHEA-COMP:14573"/>
        <dbReference type="ChEBI" id="CHEBI:15377"/>
        <dbReference type="ChEBI" id="CHEBI:15378"/>
        <dbReference type="ChEBI" id="CHEBI:17790"/>
        <dbReference type="ChEBI" id="CHEBI:140522"/>
        <dbReference type="ChEBI" id="CHEBI:140523"/>
        <dbReference type="EC" id="3.1.1.11"/>
    </reaction>
</comment>
<comment type="pathway">
    <text evidence="5 7">Glycan metabolism; pectin degradation; 2-dehydro-3-deoxy-D-gluconate from pectin: step 1/5.</text>
</comment>
<comment type="subcellular location">
    <subcellularLocation>
        <location evidence="10">Secreted</location>
        <location evidence="10">Cell wall</location>
    </subcellularLocation>
</comment>
<comment type="tissue specificity">
    <text evidence="4 5">Expressed in flower buds, siliques, developing guard cells, floral nectares, at the stigmatic surface, in the hypocotyl-root transition zone and the area of lateral root emergence. Not expressed in mature leaves.</text>
</comment>
<comment type="developmental stage">
    <text evidence="4 5">Expressed in anther tissues shortly after meiosis is completed and during the late developmental phases of siliques.</text>
</comment>
<comment type="disruption phenotype">
    <text evidence="5">The mature pollen grains are arranged in a tetrad.</text>
</comment>
<comment type="similarity">
    <text evidence="10">Belongs to the pectinesterase family.</text>
</comment>